<organism>
    <name type="scientific">Salmonella schwarzengrund (strain CVM19633)</name>
    <dbReference type="NCBI Taxonomy" id="439843"/>
    <lineage>
        <taxon>Bacteria</taxon>
        <taxon>Pseudomonadati</taxon>
        <taxon>Pseudomonadota</taxon>
        <taxon>Gammaproteobacteria</taxon>
        <taxon>Enterobacterales</taxon>
        <taxon>Enterobacteriaceae</taxon>
        <taxon>Salmonella</taxon>
    </lineage>
</organism>
<comment type="subcellular location">
    <subcellularLocation>
        <location evidence="1">Cytoplasm</location>
        <location evidence="1">Nucleoid</location>
    </subcellularLocation>
</comment>
<comment type="similarity">
    <text evidence="1">Belongs to the YejK family.</text>
</comment>
<name>NDPA_SALSV</name>
<proteinExistence type="inferred from homology"/>
<accession>B4TPC8</accession>
<keyword id="KW-0963">Cytoplasm</keyword>
<protein>
    <recommendedName>
        <fullName evidence="1">Nucleoid-associated protein YejK</fullName>
    </recommendedName>
</protein>
<sequence length="335" mass="37850">MSLDINQIALHQLIKRDEQNLELVLRDSLLEPTTTVVEMVAELHRVYSAKNKAYGLFSEESELAQALRLQRQGEEDFLAFSRAATGRLRDELAKYPFADGGIVLFCHYRYLAVEYLLVTVLNNLSSMRVNENLDINPTHYLDINHADIVARIDLTEWETNPQSTRYLTFLKGRVGRKVADFFMDFLGASEGLNAKAQNRGLLQAVDDFTAEAQLDKAERQNVRQQVYSYCNEQLQAGEEIELESLSKELSGVSEVSFSEFTAEKGYELEESFPADRSTLRQLTKYAGSGGGLTINFDAMLLGERIFWDPATDTLTIKGTPPNLRDQLQRRTSGGK</sequence>
<gene>
    <name evidence="1" type="primary">yejK</name>
    <name type="ordered locus">SeSA_A2465</name>
</gene>
<reference key="1">
    <citation type="journal article" date="2011" name="J. Bacteriol.">
        <title>Comparative genomics of 28 Salmonella enterica isolates: evidence for CRISPR-mediated adaptive sublineage evolution.</title>
        <authorList>
            <person name="Fricke W.F."/>
            <person name="Mammel M.K."/>
            <person name="McDermott P.F."/>
            <person name="Tartera C."/>
            <person name="White D.G."/>
            <person name="Leclerc J.E."/>
            <person name="Ravel J."/>
            <person name="Cebula T.A."/>
        </authorList>
    </citation>
    <scope>NUCLEOTIDE SEQUENCE [LARGE SCALE GENOMIC DNA]</scope>
    <source>
        <strain>CVM19633</strain>
    </source>
</reference>
<feature type="chain" id="PRO_1000132734" description="Nucleoid-associated protein YejK">
    <location>
        <begin position="1"/>
        <end position="335"/>
    </location>
</feature>
<dbReference type="EMBL" id="CP001127">
    <property type="protein sequence ID" value="ACF89030.1"/>
    <property type="molecule type" value="Genomic_DNA"/>
</dbReference>
<dbReference type="RefSeq" id="WP_000050812.1">
    <property type="nucleotide sequence ID" value="NC_011094.1"/>
</dbReference>
<dbReference type="SMR" id="B4TPC8"/>
<dbReference type="KEGG" id="sew:SeSA_A2465"/>
<dbReference type="HOGENOM" id="CLU_063050_0_1_6"/>
<dbReference type="Proteomes" id="UP000001865">
    <property type="component" value="Chromosome"/>
</dbReference>
<dbReference type="GO" id="GO:0043590">
    <property type="term" value="C:bacterial nucleoid"/>
    <property type="evidence" value="ECO:0007669"/>
    <property type="project" value="TreeGrafter"/>
</dbReference>
<dbReference type="GO" id="GO:0005737">
    <property type="term" value="C:cytoplasm"/>
    <property type="evidence" value="ECO:0007669"/>
    <property type="project" value="UniProtKB-UniRule"/>
</dbReference>
<dbReference type="GO" id="GO:0003690">
    <property type="term" value="F:double-stranded DNA binding"/>
    <property type="evidence" value="ECO:0007669"/>
    <property type="project" value="TreeGrafter"/>
</dbReference>
<dbReference type="GO" id="GO:0003727">
    <property type="term" value="F:single-stranded RNA binding"/>
    <property type="evidence" value="ECO:0007669"/>
    <property type="project" value="TreeGrafter"/>
</dbReference>
<dbReference type="HAMAP" id="MF_00730">
    <property type="entry name" value="NdpA"/>
    <property type="match status" value="1"/>
</dbReference>
<dbReference type="InterPro" id="IPR007358">
    <property type="entry name" value="Nucleoid_associated_NdpA"/>
</dbReference>
<dbReference type="NCBIfam" id="NF001557">
    <property type="entry name" value="PRK00378.1"/>
    <property type="match status" value="1"/>
</dbReference>
<dbReference type="PANTHER" id="PTHR38772">
    <property type="match status" value="1"/>
</dbReference>
<dbReference type="PANTHER" id="PTHR38772:SF1">
    <property type="entry name" value="NUCLEOID-ASSOCIATED PROTEIN YEJK"/>
    <property type="match status" value="1"/>
</dbReference>
<dbReference type="Pfam" id="PF04245">
    <property type="entry name" value="NA37"/>
    <property type="match status" value="1"/>
</dbReference>
<evidence type="ECO:0000255" key="1">
    <source>
        <dbReference type="HAMAP-Rule" id="MF_00730"/>
    </source>
</evidence>